<feature type="chain" id="PRO_0000162477" description="Regulatory protein RecX">
    <location>
        <begin position="1"/>
        <end position="258"/>
    </location>
</feature>
<name>RECX_STRA3</name>
<keyword id="KW-0963">Cytoplasm</keyword>
<reference key="1">
    <citation type="journal article" date="2002" name="Mol. Microbiol.">
        <title>Genome sequence of Streptococcus agalactiae, a pathogen causing invasive neonatal disease.</title>
        <authorList>
            <person name="Glaser P."/>
            <person name="Rusniok C."/>
            <person name="Buchrieser C."/>
            <person name="Chevalier F."/>
            <person name="Frangeul L."/>
            <person name="Msadek T."/>
            <person name="Zouine M."/>
            <person name="Couve E."/>
            <person name="Lalioui L."/>
            <person name="Poyart C."/>
            <person name="Trieu-Cuot P."/>
            <person name="Kunst F."/>
        </authorList>
    </citation>
    <scope>NUCLEOTIDE SEQUENCE [LARGE SCALE GENOMIC DNA]</scope>
    <source>
        <strain>NEM316</strain>
    </source>
</reference>
<proteinExistence type="inferred from homology"/>
<sequence length="258" mass="30698">MKITKIEKKKRLYTLELDNTENLYITEDTIVHFMLSKGMIVNAEKLENIKKFAQLSYGKNLGLYYISFKQRTEKEVIKYLQQHDIDSKIIPQIIDNLKSENWINDKNYVQSFIQQNLNTGDKGPYVIKQKLLQKGIKSKIIESELQAINFQDLASKISQKLYKKYQNKLPLKALKDKLMQSLTTKGFDYQIAHTVIQNLEIEKDQELEEDLIYKELDKQYQKLSKKYDQYELKQRIINALMRKGYQYEDIKSALREYL</sequence>
<dbReference type="EMBL" id="AL766845">
    <property type="protein sequence ID" value="CAD46091.1"/>
    <property type="molecule type" value="Genomic_DNA"/>
</dbReference>
<dbReference type="RefSeq" id="WP_000704977.1">
    <property type="nucleotide sequence ID" value="NC_004368.1"/>
</dbReference>
<dbReference type="SMR" id="P59209"/>
<dbReference type="KEGG" id="san:gbs0447"/>
<dbReference type="eggNOG" id="COG2137">
    <property type="taxonomic scope" value="Bacteria"/>
</dbReference>
<dbReference type="HOGENOM" id="CLU_066607_4_0_9"/>
<dbReference type="Proteomes" id="UP000000823">
    <property type="component" value="Chromosome"/>
</dbReference>
<dbReference type="GO" id="GO:0005737">
    <property type="term" value="C:cytoplasm"/>
    <property type="evidence" value="ECO:0007669"/>
    <property type="project" value="UniProtKB-SubCell"/>
</dbReference>
<dbReference type="GO" id="GO:0006282">
    <property type="term" value="P:regulation of DNA repair"/>
    <property type="evidence" value="ECO:0007669"/>
    <property type="project" value="UniProtKB-UniRule"/>
</dbReference>
<dbReference type="Gene3D" id="1.10.10.10">
    <property type="entry name" value="Winged helix-like DNA-binding domain superfamily/Winged helix DNA-binding domain"/>
    <property type="match status" value="4"/>
</dbReference>
<dbReference type="HAMAP" id="MF_01114">
    <property type="entry name" value="RecX"/>
    <property type="match status" value="1"/>
</dbReference>
<dbReference type="InterPro" id="IPR053926">
    <property type="entry name" value="RecX_HTH_1st"/>
</dbReference>
<dbReference type="InterPro" id="IPR053924">
    <property type="entry name" value="RecX_HTH_2nd"/>
</dbReference>
<dbReference type="InterPro" id="IPR053925">
    <property type="entry name" value="RecX_HTH_3rd"/>
</dbReference>
<dbReference type="InterPro" id="IPR003783">
    <property type="entry name" value="Regulatory_RecX"/>
</dbReference>
<dbReference type="InterPro" id="IPR036388">
    <property type="entry name" value="WH-like_DNA-bd_sf"/>
</dbReference>
<dbReference type="NCBIfam" id="NF010733">
    <property type="entry name" value="PRK14135.1"/>
    <property type="match status" value="1"/>
</dbReference>
<dbReference type="PANTHER" id="PTHR33602">
    <property type="entry name" value="REGULATORY PROTEIN RECX FAMILY PROTEIN"/>
    <property type="match status" value="1"/>
</dbReference>
<dbReference type="PANTHER" id="PTHR33602:SF1">
    <property type="entry name" value="REGULATORY PROTEIN RECX FAMILY PROTEIN"/>
    <property type="match status" value="1"/>
</dbReference>
<dbReference type="Pfam" id="PF21982">
    <property type="entry name" value="RecX_HTH1"/>
    <property type="match status" value="1"/>
</dbReference>
<dbReference type="Pfam" id="PF02631">
    <property type="entry name" value="RecX_HTH2"/>
    <property type="match status" value="1"/>
</dbReference>
<dbReference type="Pfam" id="PF21981">
    <property type="entry name" value="RecX_HTH3"/>
    <property type="match status" value="1"/>
</dbReference>
<evidence type="ECO:0000250" key="1"/>
<evidence type="ECO:0000305" key="2"/>
<accession>P59209</accession>
<organism>
    <name type="scientific">Streptococcus agalactiae serotype III (strain NEM316)</name>
    <dbReference type="NCBI Taxonomy" id="211110"/>
    <lineage>
        <taxon>Bacteria</taxon>
        <taxon>Bacillati</taxon>
        <taxon>Bacillota</taxon>
        <taxon>Bacilli</taxon>
        <taxon>Lactobacillales</taxon>
        <taxon>Streptococcaceae</taxon>
        <taxon>Streptococcus</taxon>
    </lineage>
</organism>
<gene>
    <name type="primary">recX</name>
    <name type="ordered locus">gbs0447</name>
</gene>
<protein>
    <recommendedName>
        <fullName>Regulatory protein RecX</fullName>
    </recommendedName>
</protein>
<comment type="function">
    <text evidence="1">Modulates RecA activity.</text>
</comment>
<comment type="subcellular location">
    <subcellularLocation>
        <location evidence="2">Cytoplasm</location>
    </subcellularLocation>
</comment>
<comment type="similarity">
    <text evidence="2">Belongs to the RecX family.</text>
</comment>